<comment type="function">
    <text evidence="1">Central component of the KaiBC oscillator complex, which constitutes the main circadian regulator in cyanobacteria. Its composition changes during the circadian cycle to control KaiC phosphorylation. Autophosphorylates and has a weak ATPase activity; ATPase activity defines the circadian period.</text>
</comment>
<comment type="catalytic activity">
    <reaction evidence="1">
        <text>L-seryl-[protein] + ATP = O-phospho-L-seryl-[protein] + ADP + H(+)</text>
        <dbReference type="Rhea" id="RHEA:17989"/>
        <dbReference type="Rhea" id="RHEA-COMP:9863"/>
        <dbReference type="Rhea" id="RHEA-COMP:11604"/>
        <dbReference type="ChEBI" id="CHEBI:15378"/>
        <dbReference type="ChEBI" id="CHEBI:29999"/>
        <dbReference type="ChEBI" id="CHEBI:30616"/>
        <dbReference type="ChEBI" id="CHEBI:83421"/>
        <dbReference type="ChEBI" id="CHEBI:456216"/>
        <dbReference type="EC" id="2.7.11.1"/>
    </reaction>
</comment>
<comment type="catalytic activity">
    <reaction evidence="1">
        <text>L-threonyl-[protein] + ATP = O-phospho-L-threonyl-[protein] + ADP + H(+)</text>
        <dbReference type="Rhea" id="RHEA:46608"/>
        <dbReference type="Rhea" id="RHEA-COMP:11060"/>
        <dbReference type="Rhea" id="RHEA-COMP:11605"/>
        <dbReference type="ChEBI" id="CHEBI:15378"/>
        <dbReference type="ChEBI" id="CHEBI:30013"/>
        <dbReference type="ChEBI" id="CHEBI:30616"/>
        <dbReference type="ChEBI" id="CHEBI:61977"/>
        <dbReference type="ChEBI" id="CHEBI:456216"/>
        <dbReference type="EC" id="2.7.11.1"/>
    </reaction>
</comment>
<comment type="catalytic activity">
    <reaction evidence="1">
        <text>ATP + H2O = ADP + phosphate + H(+)</text>
        <dbReference type="Rhea" id="RHEA:13065"/>
        <dbReference type="ChEBI" id="CHEBI:15377"/>
        <dbReference type="ChEBI" id="CHEBI:15378"/>
        <dbReference type="ChEBI" id="CHEBI:30616"/>
        <dbReference type="ChEBI" id="CHEBI:43474"/>
        <dbReference type="ChEBI" id="CHEBI:456216"/>
    </reaction>
</comment>
<comment type="cofactor">
    <cofactor evidence="1">
        <name>Mg(2+)</name>
        <dbReference type="ChEBI" id="CHEBI:18420"/>
    </cofactor>
    <text evidence="1">Binds 2 Mg(2+) ions per subunit, one in each domain. Mg(2+) is required for hexamerization and phosphatase activity.</text>
</comment>
<comment type="subunit">
    <text evidence="1">Homohexamer; hexamerization is dependent on ATP-binding. Component of the KaiBC complex. KaiC interacts with SasA, activating its autokinase function and leading to RpaA activation.</text>
</comment>
<comment type="domain">
    <text evidence="1">In the homohexamer the 2 domains (called CI and CII) self-associate to each form a 'donut' layer; the compactness and local conformation of the domains varies over the cell cycle and impacts function. CII has the autokinase and autophosphatase activities, both CI and CII have (weak) ATPase activity; CI has the clock pacemaker role.</text>
</comment>
<comment type="PTM">
    <text evidence="1">Phosphorylated on serine and threonine residues by autocatalysis. Has a 4 step phosphorylation cycle; the autokinase acts first on Thr-417, then Ser-416. When Ser-416 is modified KaiC switches to an autophosphatase mode, acting first on phospho-Thr-417 then phospho-Ser-416.</text>
</comment>
<comment type="miscellaneous">
    <text evidence="1">The kiaA gene has been eliminated from Prochlorococcus during genome streamlining. It has been suggested that the central oscillator in Prochlorococcus does not have to be as robust as in other cyanobacteria because the former live in specific niches of the Earth's oceans; they divide exactly once a day and at the same time. Thus gene loss, and changes in kaiC function compared to other cyanobacteria, can occur.</text>
</comment>
<comment type="similarity">
    <text evidence="1">Belongs to the KaiC family.</text>
</comment>
<protein>
    <recommendedName>
        <fullName evidence="1">Circadian clock oscillator protein KaiC</fullName>
        <ecNumber evidence="1">2.7.11.1</ecNumber>
        <ecNumber evidence="1">3.6.4.-</ecNumber>
    </recommendedName>
</protein>
<reference key="1">
    <citation type="journal article" date="2003" name="Proc. Natl. Acad. Sci. U.S.A.">
        <title>Genome sequence of the cyanobacterium Prochlorococcus marinus SS120, a nearly minimal oxyphototrophic genome.</title>
        <authorList>
            <person name="Dufresne A."/>
            <person name="Salanoubat M."/>
            <person name="Partensky F."/>
            <person name="Artiguenave F."/>
            <person name="Axmann I.M."/>
            <person name="Barbe V."/>
            <person name="Duprat S."/>
            <person name="Galperin M.Y."/>
            <person name="Koonin E.V."/>
            <person name="Le Gall F."/>
            <person name="Makarova K.S."/>
            <person name="Ostrowski M."/>
            <person name="Oztas S."/>
            <person name="Robert C."/>
            <person name="Rogozin I.B."/>
            <person name="Scanlan D.J."/>
            <person name="Tandeau de Marsac N."/>
            <person name="Weissenbach J."/>
            <person name="Wincker P."/>
            <person name="Wolf Y.I."/>
            <person name="Hess W.R."/>
        </authorList>
    </citation>
    <scope>NUCLEOTIDE SEQUENCE [LARGE SCALE GENOMIC DNA]</scope>
    <source>
        <strain>SARG / CCMP1375 / SS120</strain>
    </source>
</reference>
<organism>
    <name type="scientific">Prochlorococcus marinus (strain SARG / CCMP1375 / SS120)</name>
    <dbReference type="NCBI Taxonomy" id="167539"/>
    <lineage>
        <taxon>Bacteria</taxon>
        <taxon>Bacillati</taxon>
        <taxon>Cyanobacteriota</taxon>
        <taxon>Cyanophyceae</taxon>
        <taxon>Synechococcales</taxon>
        <taxon>Prochlorococcaceae</taxon>
        <taxon>Prochlorococcus</taxon>
    </lineage>
</organism>
<accession>Q7VAN5</accession>
<proteinExistence type="inferred from homology"/>
<evidence type="ECO:0000255" key="1">
    <source>
        <dbReference type="HAMAP-Rule" id="MF_01836"/>
    </source>
</evidence>
<name>KAIC_PROMA</name>
<feature type="chain" id="PRO_0000217776" description="Circadian clock oscillator protein KaiC">
    <location>
        <begin position="1"/>
        <end position="501"/>
    </location>
</feature>
<feature type="domain" description="KaiC 1" evidence="1">
    <location>
        <begin position="1"/>
        <end position="232"/>
    </location>
</feature>
<feature type="domain" description="KaiC 2" evidence="1">
    <location>
        <begin position="246"/>
        <end position="501"/>
    </location>
</feature>
<feature type="binding site" evidence="1">
    <location>
        <position position="34"/>
    </location>
    <ligand>
        <name>ATP</name>
        <dbReference type="ChEBI" id="CHEBI:30616"/>
        <label>1</label>
        <note>ligand shared between homodimeric partners</note>
    </ligand>
</feature>
<feature type="binding site" evidence="1">
    <location>
        <position position="35"/>
    </location>
    <ligand>
        <name>ATP</name>
        <dbReference type="ChEBI" id="CHEBI:30616"/>
        <label>1</label>
        <note>ligand shared between homodimeric partners</note>
    </ligand>
</feature>
<feature type="binding site" evidence="1">
    <location>
        <position position="36"/>
    </location>
    <ligand>
        <name>ATP</name>
        <dbReference type="ChEBI" id="CHEBI:30616"/>
        <label>1</label>
        <note>ligand shared between homodimeric partners</note>
    </ligand>
</feature>
<feature type="binding site" evidence="1">
    <location>
        <position position="37"/>
    </location>
    <ligand>
        <name>ATP</name>
        <dbReference type="ChEBI" id="CHEBI:30616"/>
        <label>1</label>
        <note>ligand shared between homodimeric partners</note>
    </ligand>
</feature>
<feature type="binding site" evidence="1">
    <location>
        <position position="38"/>
    </location>
    <ligand>
        <name>ATP</name>
        <dbReference type="ChEBI" id="CHEBI:30616"/>
        <label>1</label>
        <note>ligand shared between homodimeric partners</note>
    </ligand>
</feature>
<feature type="binding site" evidence="1">
    <location>
        <position position="38"/>
    </location>
    <ligand>
        <name>Mg(2+)</name>
        <dbReference type="ChEBI" id="CHEBI:18420"/>
        <label>1</label>
    </ligand>
</feature>
<feature type="binding site" evidence="1">
    <location>
        <position position="74"/>
    </location>
    <ligand>
        <name>ATP</name>
        <dbReference type="ChEBI" id="CHEBI:30616"/>
        <label>1</label>
        <note>ligand shared between homodimeric partners</note>
    </ligand>
</feature>
<feature type="binding site" evidence="1">
    <location>
        <position position="209"/>
    </location>
    <ligand>
        <name>ATP</name>
        <dbReference type="ChEBI" id="CHEBI:30616"/>
        <label>1</label>
        <note>ligand shared between homodimeric partners</note>
    </ligand>
</feature>
<feature type="binding site" evidence="1">
    <location>
        <position position="210"/>
    </location>
    <ligand>
        <name>ATP</name>
        <dbReference type="ChEBI" id="CHEBI:30616"/>
        <label>1</label>
        <note>ligand shared between homodimeric partners</note>
    </ligand>
</feature>
<feature type="binding site" evidence="1">
    <location>
        <position position="211"/>
    </location>
    <ligand>
        <name>ATP</name>
        <dbReference type="ChEBI" id="CHEBI:30616"/>
        <label>1</label>
        <note>ligand shared between homodimeric partners</note>
    </ligand>
</feature>
<feature type="binding site" evidence="1">
    <location>
        <position position="213"/>
    </location>
    <ligand>
        <name>ATP</name>
        <dbReference type="ChEBI" id="CHEBI:30616"/>
        <label>1</label>
        <note>ligand shared between homodimeric partners</note>
    </ligand>
</feature>
<feature type="binding site" evidence="1">
    <location>
        <position position="215"/>
    </location>
    <ligand>
        <name>ATP</name>
        <dbReference type="ChEBI" id="CHEBI:30616"/>
        <label>1</label>
        <note>ligand shared between homodimeric partners</note>
    </ligand>
</feature>
<feature type="binding site" evidence="1">
    <location>
        <position position="275"/>
    </location>
    <ligand>
        <name>ATP</name>
        <dbReference type="ChEBI" id="CHEBI:30616"/>
        <label>2</label>
        <note>ligand shared between homodimeric partners</note>
    </ligand>
</feature>
<feature type="binding site" evidence="1">
    <location>
        <position position="276"/>
    </location>
    <ligand>
        <name>ATP</name>
        <dbReference type="ChEBI" id="CHEBI:30616"/>
        <label>2</label>
        <note>ligand shared between homodimeric partners</note>
    </ligand>
</feature>
<feature type="binding site" evidence="1">
    <location>
        <position position="277"/>
    </location>
    <ligand>
        <name>ATP</name>
        <dbReference type="ChEBI" id="CHEBI:30616"/>
        <label>2</label>
        <note>ligand shared between homodimeric partners</note>
    </ligand>
</feature>
<feature type="binding site" evidence="1">
    <location>
        <position position="278"/>
    </location>
    <ligand>
        <name>ATP</name>
        <dbReference type="ChEBI" id="CHEBI:30616"/>
        <label>2</label>
        <note>ligand shared between homodimeric partners</note>
    </ligand>
</feature>
<feature type="binding site" evidence="1">
    <location>
        <position position="279"/>
    </location>
    <ligand>
        <name>ATP</name>
        <dbReference type="ChEBI" id="CHEBI:30616"/>
        <label>2</label>
        <note>ligand shared between homodimeric partners</note>
    </ligand>
</feature>
<feature type="binding site" evidence="1">
    <location>
        <position position="280"/>
    </location>
    <ligand>
        <name>ATP</name>
        <dbReference type="ChEBI" id="CHEBI:30616"/>
        <label>2</label>
        <note>ligand shared between homodimeric partners</note>
    </ligand>
</feature>
<feature type="binding site" evidence="1">
    <location>
        <position position="280"/>
    </location>
    <ligand>
        <name>Mg(2+)</name>
        <dbReference type="ChEBI" id="CHEBI:18420"/>
        <label>2</label>
    </ligand>
</feature>
<feature type="binding site" evidence="1">
    <location>
        <position position="303"/>
    </location>
    <ligand>
        <name>Mg(2+)</name>
        <dbReference type="ChEBI" id="CHEBI:18420"/>
        <label>2</label>
    </ligand>
</feature>
<feature type="binding site" evidence="1">
    <location>
        <position position="316"/>
    </location>
    <ligand>
        <name>ATP</name>
        <dbReference type="ChEBI" id="CHEBI:30616"/>
        <label>2</label>
        <note>ligand shared between homodimeric partners</note>
    </ligand>
</feature>
<feature type="binding site" evidence="1">
    <location>
        <position position="436"/>
    </location>
    <ligand>
        <name>ATP</name>
        <dbReference type="ChEBI" id="CHEBI:30616"/>
        <label>2</label>
        <note>ligand shared between homodimeric partners</note>
    </ligand>
</feature>
<feature type="binding site" evidence="1">
    <location>
        <position position="442"/>
    </location>
    <ligand>
        <name>ATP</name>
        <dbReference type="ChEBI" id="CHEBI:30616"/>
        <label>2</label>
        <note>ligand shared between homodimeric partners</note>
    </ligand>
</feature>
<feature type="binding site" evidence="1">
    <location>
        <position position="443"/>
    </location>
    <ligand>
        <name>ATP</name>
        <dbReference type="ChEBI" id="CHEBI:30616"/>
        <label>2</label>
        <note>ligand shared between homodimeric partners</note>
    </ligand>
</feature>
<feature type="binding site" evidence="1">
    <location>
        <position position="444"/>
    </location>
    <ligand>
        <name>ATP</name>
        <dbReference type="ChEBI" id="CHEBI:30616"/>
        <label>2</label>
        <note>ligand shared between homodimeric partners</note>
    </ligand>
</feature>
<feature type="binding site" evidence="1">
    <location>
        <position position="446"/>
    </location>
    <ligand>
        <name>ATP</name>
        <dbReference type="ChEBI" id="CHEBI:30616"/>
        <label>2</label>
        <note>ligand shared between homodimeric partners</note>
    </ligand>
</feature>
<feature type="binding site" evidence="1">
    <location>
        <position position="448"/>
    </location>
    <ligand>
        <name>ATP</name>
        <dbReference type="ChEBI" id="CHEBI:30616"/>
        <label>2</label>
        <note>ligand shared between homodimeric partners</note>
    </ligand>
</feature>
<feature type="binding site" evidence="1">
    <location>
        <position position="450"/>
    </location>
    <ligand>
        <name>ATP</name>
        <dbReference type="ChEBI" id="CHEBI:30616"/>
        <label>2</label>
        <note>ligand shared between homodimeric partners</note>
    </ligand>
</feature>
<feature type="modified residue" description="Phosphoserine; by autocatalysis" evidence="1">
    <location>
        <position position="416"/>
    </location>
</feature>
<feature type="modified residue" description="Phosphothreonine; by autocatalysis" evidence="1">
    <location>
        <position position="417"/>
    </location>
</feature>
<keyword id="KW-0067">ATP-binding</keyword>
<keyword id="KW-0090">Biological rhythms</keyword>
<keyword id="KW-0378">Hydrolase</keyword>
<keyword id="KW-0418">Kinase</keyword>
<keyword id="KW-0460">Magnesium</keyword>
<keyword id="KW-0479">Metal-binding</keyword>
<keyword id="KW-0547">Nucleotide-binding</keyword>
<keyword id="KW-0597">Phosphoprotein</keyword>
<keyword id="KW-1185">Reference proteome</keyword>
<keyword id="KW-0677">Repeat</keyword>
<keyword id="KW-0723">Serine/threonine-protein kinase</keyword>
<keyword id="KW-0804">Transcription</keyword>
<keyword id="KW-0805">Transcription regulation</keyword>
<keyword id="KW-0808">Transferase</keyword>
<gene>
    <name evidence="1" type="primary">kaiC</name>
    <name type="ordered locus">Pro_1423</name>
</gene>
<sequence length="501" mass="55906">MQVQKLPTGIEGFDDVCQGGLPTARSTLVSGTSGTGKTVFSLQYLHHGICHFDEPGVFVTFEESPLDIIRNAGSFGWDLQELINQDKLFVLDASPDPDGQDVAGNFDLSGLIERISYAIKKYKAKRVAIDSMTAVFQQYDAVYVVRREIFRLIARLKEIGVTTVMTSERIDEYGPIARYGVEEFVSDNVVILRNVLESEKRRRTVEVLKLRGTTHMKGEFPFTMGAEGITVFALGAMRLTQRSSNIRISSGVPDLDDMCGGGYFQDSIILATGATGTGKTMLVSKFIEDAYRNQERAIIFAYEESRAQLLRNATSWGIDFEQMEADGLLKIICAYPESTGLEDHLQIIKTEITEFKPSRMAIDSLSALARGVSLNAFRQFVIGVTGYAKQEEIAGFFTNTAEEFMGSHSITDSHISTITDTILLLQYVEIRGEMARAINVFKMRGSWHDKRIREFIITNEGPEIKDSFTNFEQIFSGAPHRISGEDSISGVFKSLDKREKK</sequence>
<dbReference type="EC" id="2.7.11.1" evidence="1"/>
<dbReference type="EC" id="3.6.4.-" evidence="1"/>
<dbReference type="EMBL" id="AE017126">
    <property type="protein sequence ID" value="AAQ00467.1"/>
    <property type="molecule type" value="Genomic_DNA"/>
</dbReference>
<dbReference type="RefSeq" id="NP_875814.1">
    <property type="nucleotide sequence ID" value="NC_005042.1"/>
</dbReference>
<dbReference type="RefSeq" id="WP_011125574.1">
    <property type="nucleotide sequence ID" value="NC_005042.1"/>
</dbReference>
<dbReference type="SMR" id="Q7VAN5"/>
<dbReference type="STRING" id="167539.Pro_1423"/>
<dbReference type="EnsemblBacteria" id="AAQ00467">
    <property type="protein sequence ID" value="AAQ00467"/>
    <property type="gene ID" value="Pro_1423"/>
</dbReference>
<dbReference type="KEGG" id="pma:Pro_1423"/>
<dbReference type="PATRIC" id="fig|167539.5.peg.1489"/>
<dbReference type="eggNOG" id="COG0467">
    <property type="taxonomic scope" value="Bacteria"/>
</dbReference>
<dbReference type="HOGENOM" id="CLU_023669_4_1_3"/>
<dbReference type="OrthoDB" id="9787927at2"/>
<dbReference type="Proteomes" id="UP000001420">
    <property type="component" value="Chromosome"/>
</dbReference>
<dbReference type="GO" id="GO:0005524">
    <property type="term" value="F:ATP binding"/>
    <property type="evidence" value="ECO:0007669"/>
    <property type="project" value="UniProtKB-UniRule"/>
</dbReference>
<dbReference type="GO" id="GO:0016887">
    <property type="term" value="F:ATP hydrolysis activity"/>
    <property type="evidence" value="ECO:0007669"/>
    <property type="project" value="RHEA"/>
</dbReference>
<dbReference type="GO" id="GO:0003677">
    <property type="term" value="F:DNA binding"/>
    <property type="evidence" value="ECO:0007669"/>
    <property type="project" value="InterPro"/>
</dbReference>
<dbReference type="GO" id="GO:0000287">
    <property type="term" value="F:magnesium ion binding"/>
    <property type="evidence" value="ECO:0007669"/>
    <property type="project" value="UniProtKB-UniRule"/>
</dbReference>
<dbReference type="GO" id="GO:0106310">
    <property type="term" value="F:protein serine kinase activity"/>
    <property type="evidence" value="ECO:0007669"/>
    <property type="project" value="RHEA"/>
</dbReference>
<dbReference type="GO" id="GO:0004674">
    <property type="term" value="F:protein serine/threonine kinase activity"/>
    <property type="evidence" value="ECO:0007669"/>
    <property type="project" value="UniProtKB-KW"/>
</dbReference>
<dbReference type="GO" id="GO:0004712">
    <property type="term" value="F:protein serine/threonine/tyrosine kinase activity"/>
    <property type="evidence" value="ECO:0007669"/>
    <property type="project" value="UniProtKB-UniRule"/>
</dbReference>
<dbReference type="GO" id="GO:0007623">
    <property type="term" value="P:circadian rhythm"/>
    <property type="evidence" value="ECO:0007669"/>
    <property type="project" value="UniProtKB-UniRule"/>
</dbReference>
<dbReference type="GO" id="GO:0042752">
    <property type="term" value="P:regulation of circadian rhythm"/>
    <property type="evidence" value="ECO:0007669"/>
    <property type="project" value="InterPro"/>
</dbReference>
<dbReference type="GO" id="GO:0006355">
    <property type="term" value="P:regulation of DNA-templated transcription"/>
    <property type="evidence" value="ECO:0007669"/>
    <property type="project" value="InterPro"/>
</dbReference>
<dbReference type="CDD" id="cd19485">
    <property type="entry name" value="KaiC-N"/>
    <property type="match status" value="1"/>
</dbReference>
<dbReference type="CDD" id="cd19484">
    <property type="entry name" value="KaiC_C"/>
    <property type="match status" value="1"/>
</dbReference>
<dbReference type="Gene3D" id="3.40.50.300">
    <property type="entry name" value="P-loop containing nucleotide triphosphate hydrolases"/>
    <property type="match status" value="2"/>
</dbReference>
<dbReference type="HAMAP" id="MF_01836">
    <property type="entry name" value="KaiC"/>
    <property type="match status" value="1"/>
</dbReference>
<dbReference type="InterPro" id="IPR051347">
    <property type="entry name" value="Circadian_clock_KaiC-rel"/>
</dbReference>
<dbReference type="InterPro" id="IPR013503">
    <property type="entry name" value="Circadian_KaiC_bact"/>
</dbReference>
<dbReference type="InterPro" id="IPR030665">
    <property type="entry name" value="KaiC"/>
</dbReference>
<dbReference type="InterPro" id="IPR014774">
    <property type="entry name" value="KaiC-like_dom"/>
</dbReference>
<dbReference type="InterPro" id="IPR047222">
    <property type="entry name" value="KaiC_C"/>
</dbReference>
<dbReference type="InterPro" id="IPR010624">
    <property type="entry name" value="KaiC_dom"/>
</dbReference>
<dbReference type="InterPro" id="IPR047221">
    <property type="entry name" value="KaiC_N"/>
</dbReference>
<dbReference type="InterPro" id="IPR027417">
    <property type="entry name" value="P-loop_NTPase"/>
</dbReference>
<dbReference type="NCBIfam" id="TIGR02655">
    <property type="entry name" value="circ_KaiC"/>
    <property type="match status" value="1"/>
</dbReference>
<dbReference type="NCBIfam" id="NF006799">
    <property type="entry name" value="PRK09302.1"/>
    <property type="match status" value="1"/>
</dbReference>
<dbReference type="PANTHER" id="PTHR42926">
    <property type="match status" value="1"/>
</dbReference>
<dbReference type="PANTHER" id="PTHR42926:SF1">
    <property type="entry name" value="CIRCADIAN CLOCK OSCILLATOR PROTEIN KAIC 1"/>
    <property type="match status" value="1"/>
</dbReference>
<dbReference type="Pfam" id="PF06745">
    <property type="entry name" value="ATPase"/>
    <property type="match status" value="2"/>
</dbReference>
<dbReference type="PIRSF" id="PIRSF039117">
    <property type="entry name" value="KaiC"/>
    <property type="match status" value="1"/>
</dbReference>
<dbReference type="SUPFAM" id="SSF52540">
    <property type="entry name" value="P-loop containing nucleoside triphosphate hydrolases"/>
    <property type="match status" value="2"/>
</dbReference>
<dbReference type="PROSITE" id="PS51146">
    <property type="entry name" value="KAIC"/>
    <property type="match status" value="2"/>
</dbReference>